<organism>
    <name type="scientific">Antechinus bellus</name>
    <name type="common">Fawn marsupial mouse</name>
    <dbReference type="NCBI Taxonomy" id="71384"/>
    <lineage>
        <taxon>Eukaryota</taxon>
        <taxon>Metazoa</taxon>
        <taxon>Chordata</taxon>
        <taxon>Craniata</taxon>
        <taxon>Vertebrata</taxon>
        <taxon>Euteleostomi</taxon>
        <taxon>Mammalia</taxon>
        <taxon>Metatheria</taxon>
        <taxon>Dasyuromorphia</taxon>
        <taxon>Dasyuridae</taxon>
        <taxon>Antechinus</taxon>
    </lineage>
</organism>
<comment type="function">
    <text evidence="2">Component of the ubiquinol-cytochrome c reductase complex (complex III or cytochrome b-c1 complex) that is part of the mitochondrial respiratory chain. The b-c1 complex mediates electron transfer from ubiquinol to cytochrome c. Contributes to the generation of a proton gradient across the mitochondrial membrane that is then used for ATP synthesis.</text>
</comment>
<comment type="cofactor">
    <cofactor evidence="2">
        <name>heme b</name>
        <dbReference type="ChEBI" id="CHEBI:60344"/>
    </cofactor>
    <text evidence="2">Binds 2 heme b groups non-covalently.</text>
</comment>
<comment type="subunit">
    <text evidence="2">The cytochrome bc1 complex contains 11 subunits: 3 respiratory subunits (MT-CYB, CYC1 and UQCRFS1), 2 core proteins (UQCRC1 and UQCRC2) and 6 low-molecular weight proteins (UQCRH/QCR6, UQCRB/QCR7, UQCRQ/QCR8, UQCR10/QCR9, UQCR11/QCR10 and a cleavage product of UQCRFS1). This cytochrome bc1 complex then forms a dimer.</text>
</comment>
<comment type="subcellular location">
    <subcellularLocation>
        <location evidence="2">Mitochondrion inner membrane</location>
        <topology evidence="2">Multi-pass membrane protein</topology>
    </subcellularLocation>
</comment>
<comment type="miscellaneous">
    <text evidence="1">Heme 1 (or BL or b562) is low-potential and absorbs at about 562 nm, and heme 2 (or BH or b566) is high-potential and absorbs at about 566 nm.</text>
</comment>
<comment type="similarity">
    <text evidence="3 4">Belongs to the cytochrome b family.</text>
</comment>
<comment type="caution">
    <text evidence="2">The full-length protein contains only eight transmembrane helices, not nine as predicted by bioinformatics tools.</text>
</comment>
<evidence type="ECO:0000250" key="1"/>
<evidence type="ECO:0000250" key="2">
    <source>
        <dbReference type="UniProtKB" id="P00157"/>
    </source>
</evidence>
<evidence type="ECO:0000255" key="3">
    <source>
        <dbReference type="PROSITE-ProRule" id="PRU00967"/>
    </source>
</evidence>
<evidence type="ECO:0000255" key="4">
    <source>
        <dbReference type="PROSITE-ProRule" id="PRU00968"/>
    </source>
</evidence>
<dbReference type="EMBL" id="AF038287">
    <property type="protein sequence ID" value="AAC15614.1"/>
    <property type="molecule type" value="Genomic_DNA"/>
</dbReference>
<dbReference type="SMR" id="O63535"/>
<dbReference type="GO" id="GO:0005743">
    <property type="term" value="C:mitochondrial inner membrane"/>
    <property type="evidence" value="ECO:0007669"/>
    <property type="project" value="UniProtKB-SubCell"/>
</dbReference>
<dbReference type="GO" id="GO:0045275">
    <property type="term" value="C:respiratory chain complex III"/>
    <property type="evidence" value="ECO:0007669"/>
    <property type="project" value="InterPro"/>
</dbReference>
<dbReference type="GO" id="GO:0046872">
    <property type="term" value="F:metal ion binding"/>
    <property type="evidence" value="ECO:0007669"/>
    <property type="project" value="UniProtKB-KW"/>
</dbReference>
<dbReference type="GO" id="GO:0008121">
    <property type="term" value="F:ubiquinol-cytochrome-c reductase activity"/>
    <property type="evidence" value="ECO:0007669"/>
    <property type="project" value="InterPro"/>
</dbReference>
<dbReference type="GO" id="GO:0006122">
    <property type="term" value="P:mitochondrial electron transport, ubiquinol to cytochrome c"/>
    <property type="evidence" value="ECO:0007669"/>
    <property type="project" value="TreeGrafter"/>
</dbReference>
<dbReference type="CDD" id="cd00290">
    <property type="entry name" value="cytochrome_b_C"/>
    <property type="match status" value="1"/>
</dbReference>
<dbReference type="CDD" id="cd00284">
    <property type="entry name" value="Cytochrome_b_N"/>
    <property type="match status" value="1"/>
</dbReference>
<dbReference type="FunFam" id="1.20.810.10:FF:000002">
    <property type="entry name" value="Cytochrome b"/>
    <property type="match status" value="1"/>
</dbReference>
<dbReference type="Gene3D" id="1.20.810.10">
    <property type="entry name" value="Cytochrome Bc1 Complex, Chain C"/>
    <property type="match status" value="1"/>
</dbReference>
<dbReference type="InterPro" id="IPR005798">
    <property type="entry name" value="Cyt_b/b6_C"/>
</dbReference>
<dbReference type="InterPro" id="IPR036150">
    <property type="entry name" value="Cyt_b/b6_C_sf"/>
</dbReference>
<dbReference type="InterPro" id="IPR005797">
    <property type="entry name" value="Cyt_b/b6_N"/>
</dbReference>
<dbReference type="InterPro" id="IPR027387">
    <property type="entry name" value="Cytb/b6-like_sf"/>
</dbReference>
<dbReference type="InterPro" id="IPR030689">
    <property type="entry name" value="Cytochrome_b"/>
</dbReference>
<dbReference type="InterPro" id="IPR048260">
    <property type="entry name" value="Cytochrome_b_C_euk/bac"/>
</dbReference>
<dbReference type="InterPro" id="IPR048259">
    <property type="entry name" value="Cytochrome_b_N_euk/bac"/>
</dbReference>
<dbReference type="InterPro" id="IPR016174">
    <property type="entry name" value="Di-haem_cyt_TM"/>
</dbReference>
<dbReference type="PANTHER" id="PTHR19271">
    <property type="entry name" value="CYTOCHROME B"/>
    <property type="match status" value="1"/>
</dbReference>
<dbReference type="PANTHER" id="PTHR19271:SF16">
    <property type="entry name" value="CYTOCHROME B"/>
    <property type="match status" value="1"/>
</dbReference>
<dbReference type="Pfam" id="PF00032">
    <property type="entry name" value="Cytochrom_B_C"/>
    <property type="match status" value="1"/>
</dbReference>
<dbReference type="Pfam" id="PF00033">
    <property type="entry name" value="Cytochrome_B"/>
    <property type="match status" value="1"/>
</dbReference>
<dbReference type="PIRSF" id="PIRSF038885">
    <property type="entry name" value="COB"/>
    <property type="match status" value="1"/>
</dbReference>
<dbReference type="SUPFAM" id="SSF81648">
    <property type="entry name" value="a domain/subunit of cytochrome bc1 complex (Ubiquinol-cytochrome c reductase)"/>
    <property type="match status" value="1"/>
</dbReference>
<dbReference type="SUPFAM" id="SSF81342">
    <property type="entry name" value="Transmembrane di-heme cytochromes"/>
    <property type="match status" value="1"/>
</dbReference>
<dbReference type="PROSITE" id="PS51003">
    <property type="entry name" value="CYTB_CTER"/>
    <property type="match status" value="1"/>
</dbReference>
<dbReference type="PROSITE" id="PS51002">
    <property type="entry name" value="CYTB_NTER"/>
    <property type="match status" value="1"/>
</dbReference>
<geneLocation type="mitochondrion"/>
<accession>O63535</accession>
<feature type="chain" id="PRO_0000060591" description="Cytochrome b">
    <location>
        <begin position="1"/>
        <end position="381"/>
    </location>
</feature>
<feature type="transmembrane region" description="Helical" evidence="2">
    <location>
        <begin position="33"/>
        <end position="53"/>
    </location>
</feature>
<feature type="transmembrane region" description="Helical" evidence="2">
    <location>
        <begin position="77"/>
        <end position="98"/>
    </location>
</feature>
<feature type="transmembrane region" description="Helical" evidence="2">
    <location>
        <begin position="113"/>
        <end position="133"/>
    </location>
</feature>
<feature type="transmembrane region" description="Helical" evidence="2">
    <location>
        <begin position="178"/>
        <end position="198"/>
    </location>
</feature>
<feature type="transmembrane region" description="Helical" evidence="2">
    <location>
        <begin position="226"/>
        <end position="246"/>
    </location>
</feature>
<feature type="transmembrane region" description="Helical" evidence="2">
    <location>
        <begin position="288"/>
        <end position="308"/>
    </location>
</feature>
<feature type="transmembrane region" description="Helical" evidence="2">
    <location>
        <begin position="320"/>
        <end position="340"/>
    </location>
</feature>
<feature type="transmembrane region" description="Helical" evidence="2">
    <location>
        <begin position="347"/>
        <end position="367"/>
    </location>
</feature>
<feature type="binding site" description="axial binding residue" evidence="2">
    <location>
        <position position="83"/>
    </location>
    <ligand>
        <name>heme b</name>
        <dbReference type="ChEBI" id="CHEBI:60344"/>
        <label>b562</label>
    </ligand>
    <ligandPart>
        <name>Fe</name>
        <dbReference type="ChEBI" id="CHEBI:18248"/>
    </ligandPart>
</feature>
<feature type="binding site" description="axial binding residue" evidence="2">
    <location>
        <position position="97"/>
    </location>
    <ligand>
        <name>heme b</name>
        <dbReference type="ChEBI" id="CHEBI:60344"/>
        <label>b566</label>
    </ligand>
    <ligandPart>
        <name>Fe</name>
        <dbReference type="ChEBI" id="CHEBI:18248"/>
    </ligandPart>
</feature>
<feature type="binding site" description="axial binding residue" evidence="2">
    <location>
        <position position="182"/>
    </location>
    <ligand>
        <name>heme b</name>
        <dbReference type="ChEBI" id="CHEBI:60344"/>
        <label>b562</label>
    </ligand>
    <ligandPart>
        <name>Fe</name>
        <dbReference type="ChEBI" id="CHEBI:18248"/>
    </ligandPart>
</feature>
<feature type="binding site" description="axial binding residue" evidence="2">
    <location>
        <position position="196"/>
    </location>
    <ligand>
        <name>heme b</name>
        <dbReference type="ChEBI" id="CHEBI:60344"/>
        <label>b566</label>
    </ligand>
    <ligandPart>
        <name>Fe</name>
        <dbReference type="ChEBI" id="CHEBI:18248"/>
    </ligandPart>
</feature>
<feature type="binding site" evidence="2">
    <location>
        <position position="201"/>
    </location>
    <ligand>
        <name>a ubiquinone</name>
        <dbReference type="ChEBI" id="CHEBI:16389"/>
    </ligand>
</feature>
<gene>
    <name type="primary">MT-CYB</name>
    <name type="synonym">COB</name>
    <name type="synonym">CYTB</name>
    <name type="synonym">MTCYB</name>
</gene>
<sequence>MTNLRKTHPLMKIINHSFIDLPAPSNISAWWNFGSLLGVCLIIQILTGFFLAMHYTSDTLTAFSSVAHICRDVNYGWLIRNLHANGASMFFMCLFLHVGRGIYYGSYLYKETWNIGVILLLTVMATAFVGYVLPWGQMSFWGATVITNLLSAIPYIGTTLAEWIWGGFAVDKATLTRFFAFHFILPFIVVALAIVHLLFLHETGSNNPSGINPDSDKIPFHPYYTIKDALGLVLLFLILLLLALFSPDSLGDPDNFSPANPLNTPPHIKPEWYFLFAYAILRSIPNKLGGVLALLASILILLIIPLLHTANQRSMKFRPVSQTLFWILAANLVTLTWIGGQPVEQPFIIIGQLASMLYFLLILVLMPLAGLFENYMLKPKW</sequence>
<proteinExistence type="inferred from homology"/>
<protein>
    <recommendedName>
        <fullName>Cytochrome b</fullName>
    </recommendedName>
    <alternativeName>
        <fullName>Complex III subunit 3</fullName>
    </alternativeName>
    <alternativeName>
        <fullName>Complex III subunit III</fullName>
    </alternativeName>
    <alternativeName>
        <fullName>Cytochrome b-c1 complex subunit 3</fullName>
    </alternativeName>
    <alternativeName>
        <fullName>Ubiquinol-cytochrome-c reductase complex cytochrome b subunit</fullName>
    </alternativeName>
</protein>
<reference key="1">
    <citation type="journal article" date="1998" name="J. Mammal.">
        <title>Phylogeny of the dasyurid marsupial genus Antechinus based on cytochrome b, 12S rRNA, and protamine P1 genes.</title>
        <authorList>
            <person name="Armstrong L.A."/>
            <person name="Krajewski C."/>
            <person name="Westerman M."/>
        </authorList>
    </citation>
    <scope>NUCLEOTIDE SEQUENCE [GENOMIC DNA]</scope>
</reference>
<name>CYB_ANTBE</name>
<keyword id="KW-0249">Electron transport</keyword>
<keyword id="KW-0349">Heme</keyword>
<keyword id="KW-0408">Iron</keyword>
<keyword id="KW-0472">Membrane</keyword>
<keyword id="KW-0479">Metal-binding</keyword>
<keyword id="KW-0496">Mitochondrion</keyword>
<keyword id="KW-0999">Mitochondrion inner membrane</keyword>
<keyword id="KW-0679">Respiratory chain</keyword>
<keyword id="KW-0812">Transmembrane</keyword>
<keyword id="KW-1133">Transmembrane helix</keyword>
<keyword id="KW-0813">Transport</keyword>
<keyword id="KW-0830">Ubiquinone</keyword>